<gene>
    <name type="primary">MMP13</name>
</gene>
<comment type="function">
    <text evidence="9 11 12 13 15 16 17 22 23 24 25 29">Plays a role in the degradation of extracellular matrix proteins including fibrillar collagen, fibronectin, TNC and ACAN. Cleaves triple helical collagens, including type I, type II and type III collagen, but has the highest activity with soluble type II collagen. Can also degrade collagen type IV, type XIV and type X. May also function by activating or degrading key regulatory proteins, such as TGFB1 and CCN2. Plays a role in wound healing, tissue remodeling, cartilage degradation, bone development, bone mineralization and ossification. Required for normal embryonic bone development and ossification. Plays a role in the healing of bone fractures via endochondral ossification. Plays a role in wound healing, probably by a mechanism that involves proteolytic activation of TGFB1 and degradation of CCN2. Plays a role in keratinocyte migration during wound healing. May play a role in cell migration and in tumor cell invasion.</text>
</comment>
<comment type="cofactor">
    <cofactor evidence="4 5 6 7 8 10 11 12 14 15 16 17 18 27">
        <name>Ca(2+)</name>
        <dbReference type="ChEBI" id="CHEBI:29108"/>
    </cofactor>
    <text evidence="4 5 6 7 8 10 11 12 14 15 16 17 18 27">Can bind about 5 Ca(2+) ions per subunit.</text>
</comment>
<comment type="cofactor">
    <cofactor evidence="4 5 6 7 8 10 11 12 14 15 16 17 18">
        <name>Zn(2+)</name>
        <dbReference type="ChEBI" id="CHEBI:29105"/>
    </cofactor>
    <text evidence="4 5 6 7 8 10 11 12 14 15 16 17 18">Binds 2 Zn(2+) ions per subunit.</text>
</comment>
<comment type="activity regulation">
    <text evidence="16 23 29">Inhibited by TIMP1, TIMP2 and TIMP3. Inhibited by acetohydroxamic acid and other zinc chelators.</text>
</comment>
<comment type="subunit">
    <text evidence="5 6 7 8 10 11 12 14 15 16 17 18 23 27 29">Monomer. Interacts with TIMP1, TIMP2 and TIMP3. Binds (via the C-terminal region) to collagen.</text>
</comment>
<comment type="subcellular location">
    <subcellularLocation>
        <location evidence="35">Secreted</location>
        <location evidence="35">Extracellular space</location>
        <location evidence="35">Extracellular matrix</location>
    </subcellularLocation>
    <subcellularLocation>
        <location evidence="23">Secreted</location>
    </subcellularLocation>
</comment>
<comment type="tissue specificity">
    <text evidence="22 26 28 30">Detected in fetal cartilage and calvaria, in chondrocytes of hypertrophic cartilage in vertebrae and in the dorsal end of ribs undergoing ossification, as well as in osteoblasts and periosteal cells below the inner periosteal region of ossified ribs. Detected in chondrocytes from in joint cartilage that have been treated with TNF and IL1B, but not in untreated chondrocytes. Detected in T lymphocytes. Detected in breast carcinoma tissue.</text>
</comment>
<comment type="induction">
    <text evidence="26 28">Up-regulated by TNF and IL1B.</text>
</comment>
<comment type="domain">
    <text evidence="1">The conserved cysteine present in the cysteine-switch motif binds the catalytic zinc ion, thus inhibiting the enzyme. The dissociation of the cysteine from the zinc ion upon the activation-peptide release activates the enzyme (By similarity).</text>
</comment>
<comment type="domain">
    <text evidence="29">The C-terminal region binds to collagen.</text>
</comment>
<comment type="PTM">
    <text>The proenzyme is activated by removal of the propeptide; this cleavage can be effected by other matrix metalloproteinases, such as MMP2, MMP3 and MMP14 and may involve several cleavage steps. Cleavage can also be autocatalytic, after partial maturation by another protease or after treatment with 4-aminophenylmercuric acetate (APMA) (in vitro).</text>
</comment>
<comment type="PTM">
    <text evidence="23">N-glycosylated.</text>
</comment>
<comment type="PTM">
    <text evidence="21">Tyrosine phosphorylated by PKDCC/VLK.</text>
</comment>
<comment type="disease" evidence="9">
    <disease id="DI-02332">
        <name>Spondyloepimetaphyseal dysplasia, Missouri type</name>
        <acronym>SEMDM</acronym>
        <description>A bone disease characterized by moderate to severe metaphyseal changes, mild epiphyseal involvement, rhizomelic shortening of the lower limbs with bowing of the femora and/or tibiae, coxa vara, genu varum and pear-shaped vertebrae in childhood. Epimetaphyseal changes improve with age.</description>
        <dbReference type="MIM" id="602111"/>
    </disease>
    <text>The disease is caused by variants affecting the gene represented in this entry.</text>
</comment>
<comment type="disease" evidence="13">
    <disease id="DI-02635">
        <name>Metaphyseal anadysplasia 1</name>
        <acronym>MANDP1</acronym>
        <description>A bone development disorder characterized by skeletal anomalies that resolve spontaneously with age. Clinical characteristics are evident from the first months of life and include slight shortness of stature and a mild varus deformity of the legs. Patients attain a normal stature in adolescence and show improvement or complete resolution of varus deformity of the legs and rhizomelic micromelia.</description>
        <dbReference type="MIM" id="602111"/>
    </disease>
    <text>The disease is caused by variants affecting the gene represented in this entry.</text>
</comment>
<comment type="disease" evidence="19 20">
    <disease id="DI-04373">
        <name>Metaphyseal dysplasia, Spahr type</name>
        <acronym>MDST</acronym>
        <description>An autosomal recessive, rare disease characterized by moderate short stature, mild genua vara, and radiographic signs of metaphyseal dysplasia, but no biochemical signs of rickets.</description>
        <dbReference type="MIM" id="250400"/>
    </disease>
    <text>The disease is caused by variants affecting the gene represented in this entry.</text>
</comment>
<comment type="similarity">
    <text evidence="33">Belongs to the peptidase M10A family.</text>
</comment>
<protein>
    <recommendedName>
        <fullName>Collagenase 3</fullName>
        <ecNumber>3.4.24.-</ecNumber>
    </recommendedName>
    <alternativeName>
        <fullName>Matrix metalloproteinase-13</fullName>
        <shortName>MMP-13</shortName>
    </alternativeName>
</protein>
<dbReference type="EC" id="3.4.24.-"/>
<dbReference type="EMBL" id="X75308">
    <property type="protein sequence ID" value="CAA53056.1"/>
    <property type="molecule type" value="mRNA"/>
</dbReference>
<dbReference type="EMBL" id="X81334">
    <property type="protein sequence ID" value="CAA57108.1"/>
    <property type="molecule type" value="mRNA"/>
</dbReference>
<dbReference type="EMBL" id="AK292211">
    <property type="protein sequence ID" value="BAF84900.1"/>
    <property type="molecule type" value="mRNA"/>
</dbReference>
<dbReference type="EMBL" id="AK315341">
    <property type="protein sequence ID" value="BAG37740.1"/>
    <property type="molecule type" value="mRNA"/>
</dbReference>
<dbReference type="EMBL" id="AY741163">
    <property type="protein sequence ID" value="AAU13907.1"/>
    <property type="molecule type" value="Genomic_DNA"/>
</dbReference>
<dbReference type="EMBL" id="BC067522">
    <property type="protein sequence ID" value="AAH67522.1"/>
    <property type="molecule type" value="mRNA"/>
</dbReference>
<dbReference type="EMBL" id="BC067523">
    <property type="protein sequence ID" value="AAH67523.1"/>
    <property type="molecule type" value="mRNA"/>
</dbReference>
<dbReference type="EMBL" id="BC074807">
    <property type="protein sequence ID" value="AAH74807.1"/>
    <property type="molecule type" value="mRNA"/>
</dbReference>
<dbReference type="EMBL" id="BC074808">
    <property type="protein sequence ID" value="AAH74808.1"/>
    <property type="molecule type" value="mRNA"/>
</dbReference>
<dbReference type="CCDS" id="CCDS8324.1"/>
<dbReference type="PIR" id="A53711">
    <property type="entry name" value="A53711"/>
</dbReference>
<dbReference type="RefSeq" id="NP_002418.1">
    <property type="nucleotide sequence ID" value="NM_002427.4"/>
</dbReference>
<dbReference type="PDB" id="1EUB">
    <property type="method" value="NMR"/>
    <property type="chains" value="A=104-274"/>
</dbReference>
<dbReference type="PDB" id="1FLS">
    <property type="method" value="NMR"/>
    <property type="chains" value="A=104-268"/>
</dbReference>
<dbReference type="PDB" id="1FM1">
    <property type="method" value="NMR"/>
    <property type="chains" value="A=104-268"/>
</dbReference>
<dbReference type="PDB" id="1PEX">
    <property type="method" value="X-ray"/>
    <property type="resolution" value="2.70 A"/>
    <property type="chains" value="A=265-471"/>
</dbReference>
<dbReference type="PDB" id="1XUC">
    <property type="method" value="X-ray"/>
    <property type="resolution" value="1.70 A"/>
    <property type="chains" value="A/B=104-274"/>
</dbReference>
<dbReference type="PDB" id="1XUD">
    <property type="method" value="X-ray"/>
    <property type="resolution" value="1.80 A"/>
    <property type="chains" value="A/B=104-274"/>
</dbReference>
<dbReference type="PDB" id="1XUR">
    <property type="method" value="X-ray"/>
    <property type="resolution" value="1.85 A"/>
    <property type="chains" value="A/B=104-274"/>
</dbReference>
<dbReference type="PDB" id="1YOU">
    <property type="method" value="X-ray"/>
    <property type="resolution" value="2.30 A"/>
    <property type="chains" value="A/B=104-271"/>
</dbReference>
<dbReference type="PDB" id="1ZTQ">
    <property type="method" value="X-ray"/>
    <property type="resolution" value="2.00 A"/>
    <property type="chains" value="A/B/C/D=104-268"/>
</dbReference>
<dbReference type="PDB" id="2D1N">
    <property type="method" value="X-ray"/>
    <property type="resolution" value="2.37 A"/>
    <property type="chains" value="A/B=104-269"/>
</dbReference>
<dbReference type="PDB" id="2E2D">
    <property type="method" value="X-ray"/>
    <property type="resolution" value="2.00 A"/>
    <property type="chains" value="A=104-268"/>
</dbReference>
<dbReference type="PDB" id="2OW9">
    <property type="method" value="X-ray"/>
    <property type="resolution" value="1.74 A"/>
    <property type="chains" value="A/B=104-270"/>
</dbReference>
<dbReference type="PDB" id="2OZR">
    <property type="method" value="X-ray"/>
    <property type="resolution" value="2.30 A"/>
    <property type="chains" value="A/B/C/D/E/F/G/H=104-270"/>
</dbReference>
<dbReference type="PDB" id="2PJT">
    <property type="method" value="X-ray"/>
    <property type="resolution" value="2.80 A"/>
    <property type="chains" value="A/B/C/D=104-268"/>
</dbReference>
<dbReference type="PDB" id="2YIG">
    <property type="method" value="X-ray"/>
    <property type="resolution" value="1.70 A"/>
    <property type="chains" value="A/B=104-274"/>
</dbReference>
<dbReference type="PDB" id="3ELM">
    <property type="method" value="X-ray"/>
    <property type="resolution" value="1.90 A"/>
    <property type="chains" value="A/B=104-274"/>
</dbReference>
<dbReference type="PDB" id="3I7G">
    <property type="method" value="X-ray"/>
    <property type="resolution" value="1.95 A"/>
    <property type="chains" value="A/B=104-274"/>
</dbReference>
<dbReference type="PDB" id="3I7I">
    <property type="method" value="X-ray"/>
    <property type="resolution" value="2.21 A"/>
    <property type="chains" value="A/B=104-274"/>
</dbReference>
<dbReference type="PDB" id="3KEC">
    <property type="method" value="X-ray"/>
    <property type="resolution" value="2.05 A"/>
    <property type="chains" value="A/B=105-267"/>
</dbReference>
<dbReference type="PDB" id="3KEJ">
    <property type="method" value="X-ray"/>
    <property type="resolution" value="2.30 A"/>
    <property type="chains" value="A/B=104-270"/>
</dbReference>
<dbReference type="PDB" id="3KEK">
    <property type="method" value="X-ray"/>
    <property type="resolution" value="1.97 A"/>
    <property type="chains" value="A/B=104-270"/>
</dbReference>
<dbReference type="PDB" id="3KRY">
    <property type="method" value="X-ray"/>
    <property type="resolution" value="1.90 A"/>
    <property type="chains" value="A/B/C/D=104-267"/>
</dbReference>
<dbReference type="PDB" id="3LJZ">
    <property type="method" value="X-ray"/>
    <property type="resolution" value="2.00 A"/>
    <property type="chains" value="A/B/C/D=104-267"/>
</dbReference>
<dbReference type="PDB" id="3O2X">
    <property type="method" value="X-ray"/>
    <property type="resolution" value="1.90 A"/>
    <property type="chains" value="A/B/C/D=105-267"/>
</dbReference>
<dbReference type="PDB" id="3TVC">
    <property type="method" value="X-ray"/>
    <property type="resolution" value="2.43 A"/>
    <property type="chains" value="A=104-272"/>
</dbReference>
<dbReference type="PDB" id="3WV1">
    <property type="method" value="X-ray"/>
    <property type="resolution" value="1.98 A"/>
    <property type="chains" value="A/B=104-274"/>
</dbReference>
<dbReference type="PDB" id="3WV2">
    <property type="method" value="X-ray"/>
    <property type="resolution" value="2.30 A"/>
    <property type="chains" value="A/B=104-274"/>
</dbReference>
<dbReference type="PDB" id="3WV3">
    <property type="method" value="X-ray"/>
    <property type="resolution" value="1.60 A"/>
    <property type="chains" value="A/B=104-274"/>
</dbReference>
<dbReference type="PDB" id="3ZXH">
    <property type="method" value="X-ray"/>
    <property type="resolution" value="1.30 A"/>
    <property type="chains" value="A/B=104-274"/>
</dbReference>
<dbReference type="PDB" id="456C">
    <property type="method" value="X-ray"/>
    <property type="resolution" value="2.40 A"/>
    <property type="chains" value="A/B=104-271"/>
</dbReference>
<dbReference type="PDB" id="4A7B">
    <property type="method" value="X-ray"/>
    <property type="resolution" value="2.20 A"/>
    <property type="chains" value="A/B=104-272"/>
</dbReference>
<dbReference type="PDB" id="4FU4">
    <property type="method" value="X-ray"/>
    <property type="resolution" value="2.85 A"/>
    <property type="chains" value="A/B=104-471, C/D=25-50"/>
</dbReference>
<dbReference type="PDB" id="4FVL">
    <property type="method" value="X-ray"/>
    <property type="resolution" value="2.44 A"/>
    <property type="chains" value="A/B=104-471, C/D=31-50"/>
</dbReference>
<dbReference type="PDB" id="4G0D">
    <property type="method" value="X-ray"/>
    <property type="resolution" value="2.54 A"/>
    <property type="chains" value="A/B/C/D=104-471, W/X/Y/Z=25-50"/>
</dbReference>
<dbReference type="PDB" id="4JP4">
    <property type="method" value="X-ray"/>
    <property type="resolution" value="1.43 A"/>
    <property type="chains" value="A/B=103-274"/>
</dbReference>
<dbReference type="PDB" id="4JPA">
    <property type="method" value="X-ray"/>
    <property type="resolution" value="2.00 A"/>
    <property type="chains" value="A/B=103-274"/>
</dbReference>
<dbReference type="PDB" id="4L19">
    <property type="method" value="X-ray"/>
    <property type="resolution" value="1.66 A"/>
    <property type="chains" value="A/B=104-274"/>
</dbReference>
<dbReference type="PDB" id="5B5O">
    <property type="method" value="X-ray"/>
    <property type="resolution" value="1.20 A"/>
    <property type="chains" value="A/B=103-274"/>
</dbReference>
<dbReference type="PDB" id="5B5P">
    <property type="method" value="X-ray"/>
    <property type="resolution" value="1.60 A"/>
    <property type="chains" value="A/B=103-274"/>
</dbReference>
<dbReference type="PDB" id="5BOT">
    <property type="method" value="X-ray"/>
    <property type="resolution" value="1.85 A"/>
    <property type="chains" value="A/B=104-274"/>
</dbReference>
<dbReference type="PDB" id="5BOY">
    <property type="method" value="X-ray"/>
    <property type="resolution" value="2.03 A"/>
    <property type="chains" value="A/B=104-274"/>
</dbReference>
<dbReference type="PDB" id="5BPA">
    <property type="method" value="X-ray"/>
    <property type="resolution" value="1.79 A"/>
    <property type="chains" value="A/B=104-274"/>
</dbReference>
<dbReference type="PDB" id="5UWK">
    <property type="method" value="X-ray"/>
    <property type="resolution" value="1.60 A"/>
    <property type="chains" value="A/B=104-274"/>
</dbReference>
<dbReference type="PDB" id="5UWL">
    <property type="method" value="X-ray"/>
    <property type="resolution" value="2.55 A"/>
    <property type="chains" value="A/B=104-274"/>
</dbReference>
<dbReference type="PDB" id="5UWM">
    <property type="method" value="X-ray"/>
    <property type="resolution" value="1.62 A"/>
    <property type="chains" value="A/B=104-274"/>
</dbReference>
<dbReference type="PDB" id="5UWN">
    <property type="method" value="X-ray"/>
    <property type="resolution" value="3.20 A"/>
    <property type="chains" value="A/B/C/D/E=104-274"/>
</dbReference>
<dbReference type="PDB" id="7JU8">
    <property type="method" value="X-ray"/>
    <property type="resolution" value="2.00 A"/>
    <property type="chains" value="A/B=104-274"/>
</dbReference>
<dbReference type="PDB" id="830C">
    <property type="method" value="X-ray"/>
    <property type="resolution" value="1.60 A"/>
    <property type="chains" value="A/B=104-271"/>
</dbReference>
<dbReference type="PDBsum" id="1EUB"/>
<dbReference type="PDBsum" id="1FLS"/>
<dbReference type="PDBsum" id="1FM1"/>
<dbReference type="PDBsum" id="1PEX"/>
<dbReference type="PDBsum" id="1XUC"/>
<dbReference type="PDBsum" id="1XUD"/>
<dbReference type="PDBsum" id="1XUR"/>
<dbReference type="PDBsum" id="1YOU"/>
<dbReference type="PDBsum" id="1ZTQ"/>
<dbReference type="PDBsum" id="2D1N"/>
<dbReference type="PDBsum" id="2E2D"/>
<dbReference type="PDBsum" id="2OW9"/>
<dbReference type="PDBsum" id="2OZR"/>
<dbReference type="PDBsum" id="2PJT"/>
<dbReference type="PDBsum" id="2YIG"/>
<dbReference type="PDBsum" id="3ELM"/>
<dbReference type="PDBsum" id="3I7G"/>
<dbReference type="PDBsum" id="3I7I"/>
<dbReference type="PDBsum" id="3KEC"/>
<dbReference type="PDBsum" id="3KEJ"/>
<dbReference type="PDBsum" id="3KEK"/>
<dbReference type="PDBsum" id="3KRY"/>
<dbReference type="PDBsum" id="3LJZ"/>
<dbReference type="PDBsum" id="3O2X"/>
<dbReference type="PDBsum" id="3TVC"/>
<dbReference type="PDBsum" id="3WV1"/>
<dbReference type="PDBsum" id="3WV2"/>
<dbReference type="PDBsum" id="3WV3"/>
<dbReference type="PDBsum" id="3ZXH"/>
<dbReference type="PDBsum" id="456C"/>
<dbReference type="PDBsum" id="4A7B"/>
<dbReference type="PDBsum" id="4FU4"/>
<dbReference type="PDBsum" id="4FVL"/>
<dbReference type="PDBsum" id="4G0D"/>
<dbReference type="PDBsum" id="4JP4"/>
<dbReference type="PDBsum" id="4JPA"/>
<dbReference type="PDBsum" id="4L19"/>
<dbReference type="PDBsum" id="5B5O"/>
<dbReference type="PDBsum" id="5B5P"/>
<dbReference type="PDBsum" id="5BOT"/>
<dbReference type="PDBsum" id="5BOY"/>
<dbReference type="PDBsum" id="5BPA"/>
<dbReference type="PDBsum" id="5UWK"/>
<dbReference type="PDBsum" id="5UWL"/>
<dbReference type="PDBsum" id="5UWM"/>
<dbReference type="PDBsum" id="5UWN"/>
<dbReference type="PDBsum" id="7JU8"/>
<dbReference type="PDBsum" id="830C"/>
<dbReference type="BMRB" id="P45452"/>
<dbReference type="SMR" id="P45452"/>
<dbReference type="BioGRID" id="110465">
    <property type="interactions" value="34"/>
</dbReference>
<dbReference type="FunCoup" id="P45452">
    <property type="interactions" value="295"/>
</dbReference>
<dbReference type="IntAct" id="P45452">
    <property type="interactions" value="14"/>
</dbReference>
<dbReference type="STRING" id="9606.ENSP00000260302"/>
<dbReference type="BindingDB" id="P45452"/>
<dbReference type="ChEMBL" id="CHEMBL280"/>
<dbReference type="DrugBank" id="DB07145">
    <property type="generic name" value="(2R)-N-HYDROXY-2-[(3S)-3-METHYL-3-{4-[(2-METHYLQUINOLIN-4-YL)METHOXY]PHENYL}-2-OXOPYRROLIDIN-1-YL]PROPANAMIDE"/>
</dbReference>
<dbReference type="DrugBank" id="DB02049">
    <property type="generic name" value="2-{4-[4-(4-Chloro-Phenoxy)-Benzenesulfonyl]-Tetrahydro-Pyran-4-Yl}-N-Hydroxy-Acetamide"/>
</dbReference>
<dbReference type="DrugBank" id="DB01996">
    <property type="generic name" value="3-Methylpyridine"/>
</dbReference>
<dbReference type="DrugBank" id="DB03033">
    <property type="generic name" value="4-methoxybenzenesulfinate"/>
</dbReference>
<dbReference type="DrugBank" id="DB07827">
    <property type="generic name" value="4-{[1-METHYL-2,4-DIOXO-6-(3-PHENYLPROP-1-YN-1-YL)-1,4-DIHYDROQUINAZOLIN-3(2H)-YL]METHYL}BENZOIC ACID"/>
</dbReference>
<dbReference type="DrugBank" id="DB08388">
    <property type="generic name" value="5-(2-ETHOXYETHYL)-5-[4-(4-FLUOROPHENOXY)PHENOXY]PYRIMIDINE-2,4,6(1H,3H,5H)-TRIONE"/>
</dbReference>
<dbReference type="DrugBank" id="DB13020">
    <property type="generic name" value="Apratastat"/>
</dbReference>
<dbReference type="DrugBank" id="DB08561">
    <property type="generic name" value="BENZYL 6-BENZYL-5,7-DIOXO-6,7-DIHYDRO-5H-[1,3]THIAZOLO[3,2-C]PYRIMIDINE-2-CARBOXYLATE"/>
</dbReference>
<dbReference type="DrugBank" id="DB07556">
    <property type="generic name" value="CGS-27023"/>
</dbReference>
<dbReference type="DrugBank" id="DB08490">
    <property type="generic name" value="CTS-1027"/>
</dbReference>
<dbReference type="DrugBank" id="DB11672">
    <property type="generic name" value="Curcumin"/>
</dbReference>
<dbReference type="DrugBank" id="DB06423">
    <property type="generic name" value="Endostatin"/>
</dbReference>
<dbReference type="DrugBank" id="DB02697">
    <property type="generic name" value="Hydroxyaminovaline"/>
</dbReference>
<dbReference type="DrugBank" id="DB02255">
    <property type="generic name" value="Ilomastat"/>
</dbReference>
<dbReference type="DrugBank" id="DB00786">
    <property type="generic name" value="Marimastat"/>
</dbReference>
<dbReference type="DrugBank" id="DB04759">
    <property type="generic name" value="PYRIMIDINE-4,6-DICARBOXYLIC ACID BIS-(3-METHYL-BENZYLAMIDE)"/>
</dbReference>
<dbReference type="DrugBank" id="DB04760">
    <property type="generic name" value="PYRIMIDINE-4,6-DICARBOXYLIC ACID BIS-(4-FLUORO-3-METHYL-BENZYLAMIDE)"/>
</dbReference>
<dbReference type="DrugBank" id="DB04761">
    <property type="generic name" value="PYRIMIDINE-4,6-DICARBOXYLIC ACID BIS-[(PYRIDIN-3-YLMETHYL)-AMIDE]"/>
</dbReference>
<dbReference type="DrugBank" id="DB07013">
    <property type="generic name" value="TERT-BUTYL 4-({[4-(BUT-2-YN-1-YLAMINO)PHENYL]SULFONYL}METHYL)-4-[(HYDROXYAMINO)CARBONYL]PIPERIDINE-1-CARBOXYLATE"/>
</dbReference>
<dbReference type="DrugBank" id="DB02071">
    <property type="generic name" value="WAY-151693"/>
</dbReference>
<dbReference type="DrugCentral" id="P45452"/>
<dbReference type="GuidetoPHARMACOLOGY" id="1637"/>
<dbReference type="MEROPS" id="M10.013"/>
<dbReference type="GlyCosmos" id="P45452">
    <property type="glycosylation" value="2 sites, No reported glycans"/>
</dbReference>
<dbReference type="GlyGen" id="P45452">
    <property type="glycosylation" value="3 sites, 1 O-linked glycan (1 site)"/>
</dbReference>
<dbReference type="iPTMnet" id="P45452"/>
<dbReference type="PhosphoSitePlus" id="P45452"/>
<dbReference type="BioMuta" id="MMP13"/>
<dbReference type="DMDM" id="1168998"/>
<dbReference type="MassIVE" id="P45452"/>
<dbReference type="PaxDb" id="9606-ENSP00000260302"/>
<dbReference type="PeptideAtlas" id="P45452"/>
<dbReference type="ProteomicsDB" id="55677"/>
<dbReference type="ABCD" id="P45452">
    <property type="antibodies" value="26 sequenced antibodies"/>
</dbReference>
<dbReference type="Antibodypedia" id="18066">
    <property type="antibodies" value="1097 antibodies from 40 providers"/>
</dbReference>
<dbReference type="DNASU" id="4322"/>
<dbReference type="Ensembl" id="ENST00000260302.8">
    <property type="protein sequence ID" value="ENSP00000260302.3"/>
    <property type="gene ID" value="ENSG00000137745.13"/>
</dbReference>
<dbReference type="GeneID" id="4322"/>
<dbReference type="KEGG" id="hsa:4322"/>
<dbReference type="MANE-Select" id="ENST00000260302.8">
    <property type="protein sequence ID" value="ENSP00000260302.3"/>
    <property type="RefSeq nucleotide sequence ID" value="NM_002427.4"/>
    <property type="RefSeq protein sequence ID" value="NP_002418.1"/>
</dbReference>
<dbReference type="UCSC" id="uc001phl.4">
    <property type="organism name" value="human"/>
</dbReference>
<dbReference type="AGR" id="HGNC:7159"/>
<dbReference type="CTD" id="4322"/>
<dbReference type="DisGeNET" id="4322"/>
<dbReference type="GeneCards" id="MMP13"/>
<dbReference type="HGNC" id="HGNC:7159">
    <property type="gene designation" value="MMP13"/>
</dbReference>
<dbReference type="HPA" id="ENSG00000137745">
    <property type="expression patterns" value="Tissue enriched (urinary)"/>
</dbReference>
<dbReference type="MalaCards" id="MMP13"/>
<dbReference type="MIM" id="250400">
    <property type="type" value="phenotype"/>
</dbReference>
<dbReference type="MIM" id="600108">
    <property type="type" value="gene"/>
</dbReference>
<dbReference type="MIM" id="602111">
    <property type="type" value="phenotype"/>
</dbReference>
<dbReference type="neXtProt" id="NX_P45452"/>
<dbReference type="OpenTargets" id="ENSG00000137745"/>
<dbReference type="Orphanet" id="1040">
    <property type="disease" value="Metaphyseal anadysplasia"/>
</dbReference>
<dbReference type="Orphanet" id="2501">
    <property type="disease" value="Metaphyseal chondrodysplasia, Spahr type"/>
</dbReference>
<dbReference type="Orphanet" id="93356">
    <property type="disease" value="Spondyloepimetaphyseal dysplasia, Missouri type"/>
</dbReference>
<dbReference type="PharmGKB" id="PA30871"/>
<dbReference type="VEuPathDB" id="HostDB:ENSG00000137745"/>
<dbReference type="eggNOG" id="KOG1565">
    <property type="taxonomic scope" value="Eukaryota"/>
</dbReference>
<dbReference type="GeneTree" id="ENSGT00940000157450"/>
<dbReference type="InParanoid" id="P45452"/>
<dbReference type="OMA" id="THCWSLP"/>
<dbReference type="OrthoDB" id="406838at2759"/>
<dbReference type="PAN-GO" id="P45452">
    <property type="GO annotations" value="3 GO annotations based on evolutionary models"/>
</dbReference>
<dbReference type="PhylomeDB" id="P45452"/>
<dbReference type="TreeFam" id="TF315428"/>
<dbReference type="BRENDA" id="3.4.24.17">
    <property type="organism ID" value="2681"/>
</dbReference>
<dbReference type="BRENDA" id="3.4.24.35">
    <property type="organism ID" value="2681"/>
</dbReference>
<dbReference type="BRENDA" id="3.4.24.65">
    <property type="organism ID" value="2681"/>
</dbReference>
<dbReference type="BRENDA" id="3.4.24.B4">
    <property type="organism ID" value="2681"/>
</dbReference>
<dbReference type="PathwayCommons" id="P45452"/>
<dbReference type="Reactome" id="R-HSA-1442490">
    <property type="pathway name" value="Collagen degradation"/>
</dbReference>
<dbReference type="Reactome" id="R-HSA-1474228">
    <property type="pathway name" value="Degradation of the extracellular matrix"/>
</dbReference>
<dbReference type="Reactome" id="R-HSA-1592389">
    <property type="pathway name" value="Activation of Matrix Metalloproteinases"/>
</dbReference>
<dbReference type="Reactome" id="R-HSA-2022090">
    <property type="pathway name" value="Assembly of collagen fibrils and other multimeric structures"/>
</dbReference>
<dbReference type="Reactome" id="R-HSA-8941332">
    <property type="pathway name" value="RUNX2 regulates genes involved in cell migration"/>
</dbReference>
<dbReference type="SignaLink" id="P45452"/>
<dbReference type="SIGNOR" id="P45452"/>
<dbReference type="BioGRID-ORCS" id="4322">
    <property type="hits" value="13 hits in 1160 CRISPR screens"/>
</dbReference>
<dbReference type="ChiTaRS" id="MMP13">
    <property type="organism name" value="human"/>
</dbReference>
<dbReference type="EvolutionaryTrace" id="P45452"/>
<dbReference type="GeneWiki" id="Matrix_metallopeptidase_13"/>
<dbReference type="GenomeRNAi" id="4322"/>
<dbReference type="Pharos" id="P45452">
    <property type="development level" value="Tchem"/>
</dbReference>
<dbReference type="PRO" id="PR:P45452"/>
<dbReference type="Proteomes" id="UP000005640">
    <property type="component" value="Chromosome 11"/>
</dbReference>
<dbReference type="RNAct" id="P45452">
    <property type="molecule type" value="protein"/>
</dbReference>
<dbReference type="Bgee" id="ENSG00000137745">
    <property type="expression patterns" value="Expressed in periodontal ligament and 44 other cell types or tissues"/>
</dbReference>
<dbReference type="ExpressionAtlas" id="P45452">
    <property type="expression patterns" value="baseline and differential"/>
</dbReference>
<dbReference type="GO" id="GO:0031012">
    <property type="term" value="C:extracellular matrix"/>
    <property type="evidence" value="ECO:0007669"/>
    <property type="project" value="InterPro"/>
</dbReference>
<dbReference type="GO" id="GO:0005576">
    <property type="term" value="C:extracellular region"/>
    <property type="evidence" value="ECO:0000304"/>
    <property type="project" value="Reactome"/>
</dbReference>
<dbReference type="GO" id="GO:0005615">
    <property type="term" value="C:extracellular space"/>
    <property type="evidence" value="ECO:0000318"/>
    <property type="project" value="GO_Central"/>
</dbReference>
<dbReference type="GO" id="GO:0005509">
    <property type="term" value="F:calcium ion binding"/>
    <property type="evidence" value="ECO:0000314"/>
    <property type="project" value="UniProtKB"/>
</dbReference>
<dbReference type="GO" id="GO:0005518">
    <property type="term" value="F:collagen binding"/>
    <property type="evidence" value="ECO:0000314"/>
    <property type="project" value="UniProtKB"/>
</dbReference>
<dbReference type="GO" id="GO:0004175">
    <property type="term" value="F:endopeptidase activity"/>
    <property type="evidence" value="ECO:0000314"/>
    <property type="project" value="UniProtKB"/>
</dbReference>
<dbReference type="GO" id="GO:0004222">
    <property type="term" value="F:metalloendopeptidase activity"/>
    <property type="evidence" value="ECO:0000314"/>
    <property type="project" value="UniProtKB"/>
</dbReference>
<dbReference type="GO" id="GO:0004252">
    <property type="term" value="F:serine-type endopeptidase activity"/>
    <property type="evidence" value="ECO:0000304"/>
    <property type="project" value="Reactome"/>
</dbReference>
<dbReference type="GO" id="GO:0008270">
    <property type="term" value="F:zinc ion binding"/>
    <property type="evidence" value="ECO:0000314"/>
    <property type="project" value="UniProtKB"/>
</dbReference>
<dbReference type="GO" id="GO:0030282">
    <property type="term" value="P:bone mineralization"/>
    <property type="evidence" value="ECO:0007669"/>
    <property type="project" value="Ensembl"/>
</dbReference>
<dbReference type="GO" id="GO:0060349">
    <property type="term" value="P:bone morphogenesis"/>
    <property type="evidence" value="ECO:0000314"/>
    <property type="project" value="UniProtKB"/>
</dbReference>
<dbReference type="GO" id="GO:0030574">
    <property type="term" value="P:collagen catabolic process"/>
    <property type="evidence" value="ECO:0000314"/>
    <property type="project" value="UniProtKB"/>
</dbReference>
<dbReference type="GO" id="GO:0001958">
    <property type="term" value="P:endochondral ossification"/>
    <property type="evidence" value="ECO:0007669"/>
    <property type="project" value="Ensembl"/>
</dbReference>
<dbReference type="GO" id="GO:0022617">
    <property type="term" value="P:extracellular matrix disassembly"/>
    <property type="evidence" value="ECO:0000315"/>
    <property type="project" value="UniProtKB"/>
</dbReference>
<dbReference type="GO" id="GO:0030198">
    <property type="term" value="P:extracellular matrix organization"/>
    <property type="evidence" value="ECO:0000318"/>
    <property type="project" value="GO_Central"/>
</dbReference>
<dbReference type="GO" id="GO:0003417">
    <property type="term" value="P:growth plate cartilage development"/>
    <property type="evidence" value="ECO:0007669"/>
    <property type="project" value="Ensembl"/>
</dbReference>
<dbReference type="GO" id="GO:0006508">
    <property type="term" value="P:proteolysis"/>
    <property type="evidence" value="ECO:0000304"/>
    <property type="project" value="ProtInc"/>
</dbReference>
<dbReference type="GO" id="GO:1904645">
    <property type="term" value="P:response to amyloid-beta"/>
    <property type="evidence" value="ECO:0000304"/>
    <property type="project" value="ARUK-UCL"/>
</dbReference>
<dbReference type="CDD" id="cd00094">
    <property type="entry name" value="HX"/>
    <property type="match status" value="1"/>
</dbReference>
<dbReference type="CDD" id="cd04278">
    <property type="entry name" value="ZnMc_MMP"/>
    <property type="match status" value="1"/>
</dbReference>
<dbReference type="FunFam" id="3.40.390.10:FF:000007">
    <property type="entry name" value="Collagenase 3"/>
    <property type="match status" value="1"/>
</dbReference>
<dbReference type="FunFam" id="2.110.10.10:FF:000002">
    <property type="entry name" value="Matrix metallopeptidase 3"/>
    <property type="match status" value="1"/>
</dbReference>
<dbReference type="Gene3D" id="3.40.390.10">
    <property type="entry name" value="Collagenase (Catalytic Domain)"/>
    <property type="match status" value="1"/>
</dbReference>
<dbReference type="Gene3D" id="2.110.10.10">
    <property type="entry name" value="Hemopexin-like domain"/>
    <property type="match status" value="1"/>
</dbReference>
<dbReference type="InterPro" id="IPR000585">
    <property type="entry name" value="Hemopexin-like_dom"/>
</dbReference>
<dbReference type="InterPro" id="IPR036375">
    <property type="entry name" value="Hemopexin-like_dom_sf"/>
</dbReference>
<dbReference type="InterPro" id="IPR018487">
    <property type="entry name" value="Hemopexin-like_repeat"/>
</dbReference>
<dbReference type="InterPro" id="IPR018486">
    <property type="entry name" value="Hemopexin_CS"/>
</dbReference>
<dbReference type="InterPro" id="IPR033739">
    <property type="entry name" value="M10A_MMP"/>
</dbReference>
<dbReference type="InterPro" id="IPR024079">
    <property type="entry name" value="MetalloPept_cat_dom_sf"/>
</dbReference>
<dbReference type="InterPro" id="IPR001818">
    <property type="entry name" value="Pept_M10_metallopeptidase"/>
</dbReference>
<dbReference type="InterPro" id="IPR021190">
    <property type="entry name" value="Pept_M10A"/>
</dbReference>
<dbReference type="InterPro" id="IPR021158">
    <property type="entry name" value="Pept_M10A_Zn_BS"/>
</dbReference>
<dbReference type="InterPro" id="IPR006026">
    <property type="entry name" value="Peptidase_Metallo"/>
</dbReference>
<dbReference type="InterPro" id="IPR002477">
    <property type="entry name" value="Peptidoglycan-bd-like"/>
</dbReference>
<dbReference type="InterPro" id="IPR036365">
    <property type="entry name" value="PGBD-like_sf"/>
</dbReference>
<dbReference type="PANTHER" id="PTHR10201:SF165">
    <property type="entry name" value="COLLAGENASE 3"/>
    <property type="match status" value="1"/>
</dbReference>
<dbReference type="PANTHER" id="PTHR10201">
    <property type="entry name" value="MATRIX METALLOPROTEINASE"/>
    <property type="match status" value="1"/>
</dbReference>
<dbReference type="Pfam" id="PF00045">
    <property type="entry name" value="Hemopexin"/>
    <property type="match status" value="4"/>
</dbReference>
<dbReference type="Pfam" id="PF00413">
    <property type="entry name" value="Peptidase_M10"/>
    <property type="match status" value="1"/>
</dbReference>
<dbReference type="Pfam" id="PF01471">
    <property type="entry name" value="PG_binding_1"/>
    <property type="match status" value="1"/>
</dbReference>
<dbReference type="PIRSF" id="PIRSF001191">
    <property type="entry name" value="Peptidase_M10A_matrix"/>
    <property type="match status" value="1"/>
</dbReference>
<dbReference type="PRINTS" id="PR00138">
    <property type="entry name" value="MATRIXIN"/>
</dbReference>
<dbReference type="SMART" id="SM00120">
    <property type="entry name" value="HX"/>
    <property type="match status" value="4"/>
</dbReference>
<dbReference type="SMART" id="SM00235">
    <property type="entry name" value="ZnMc"/>
    <property type="match status" value="1"/>
</dbReference>
<dbReference type="SUPFAM" id="SSF50923">
    <property type="entry name" value="Hemopexin-like domain"/>
    <property type="match status" value="1"/>
</dbReference>
<dbReference type="SUPFAM" id="SSF55486">
    <property type="entry name" value="Metalloproteases ('zincins'), catalytic domain"/>
    <property type="match status" value="1"/>
</dbReference>
<dbReference type="SUPFAM" id="SSF47090">
    <property type="entry name" value="PGBD-like"/>
    <property type="match status" value="1"/>
</dbReference>
<dbReference type="PROSITE" id="PS00546">
    <property type="entry name" value="CYSTEINE_SWITCH"/>
    <property type="match status" value="1"/>
</dbReference>
<dbReference type="PROSITE" id="PS00024">
    <property type="entry name" value="HEMOPEXIN"/>
    <property type="match status" value="1"/>
</dbReference>
<dbReference type="PROSITE" id="PS51642">
    <property type="entry name" value="HEMOPEXIN_2"/>
    <property type="match status" value="4"/>
</dbReference>
<dbReference type="PROSITE" id="PS00142">
    <property type="entry name" value="ZINC_PROTEASE"/>
    <property type="match status" value="1"/>
</dbReference>
<evidence type="ECO:0000250" key="1"/>
<evidence type="ECO:0000255" key="2"/>
<evidence type="ECO:0000256" key="3">
    <source>
        <dbReference type="SAM" id="MobiDB-lite"/>
    </source>
</evidence>
<evidence type="ECO:0000269" key="4">
    <source>
    </source>
</evidence>
<evidence type="ECO:0000269" key="5">
    <source>
    </source>
</evidence>
<evidence type="ECO:0000269" key="6">
    <source>
    </source>
</evidence>
<evidence type="ECO:0000269" key="7">
    <source>
    </source>
</evidence>
<evidence type="ECO:0000269" key="8">
    <source>
    </source>
</evidence>
<evidence type="ECO:0000269" key="9">
    <source>
    </source>
</evidence>
<evidence type="ECO:0000269" key="10">
    <source>
    </source>
</evidence>
<evidence type="ECO:0000269" key="11">
    <source>
    </source>
</evidence>
<evidence type="ECO:0000269" key="12">
    <source>
    </source>
</evidence>
<evidence type="ECO:0000269" key="13">
    <source>
    </source>
</evidence>
<evidence type="ECO:0000269" key="14">
    <source>
    </source>
</evidence>
<evidence type="ECO:0000269" key="15">
    <source>
    </source>
</evidence>
<evidence type="ECO:0000269" key="16">
    <source>
    </source>
</evidence>
<evidence type="ECO:0000269" key="17">
    <source>
    </source>
</evidence>
<evidence type="ECO:0000269" key="18">
    <source>
    </source>
</evidence>
<evidence type="ECO:0000269" key="19">
    <source>
    </source>
</evidence>
<evidence type="ECO:0000269" key="20">
    <source>
    </source>
</evidence>
<evidence type="ECO:0000269" key="21">
    <source>
    </source>
</evidence>
<evidence type="ECO:0000269" key="22">
    <source>
    </source>
</evidence>
<evidence type="ECO:0000269" key="23">
    <source>
    </source>
</evidence>
<evidence type="ECO:0000269" key="24">
    <source>
    </source>
</evidence>
<evidence type="ECO:0000269" key="25">
    <source>
    </source>
</evidence>
<evidence type="ECO:0000269" key="26">
    <source>
    </source>
</evidence>
<evidence type="ECO:0000269" key="27">
    <source>
    </source>
</evidence>
<evidence type="ECO:0000269" key="28">
    <source>
    </source>
</evidence>
<evidence type="ECO:0000269" key="29">
    <source>
    </source>
</evidence>
<evidence type="ECO:0000269" key="30">
    <source>
    </source>
</evidence>
<evidence type="ECO:0000269" key="31">
    <source ref="4"/>
</evidence>
<evidence type="ECO:0000303" key="32">
    <source>
    </source>
</evidence>
<evidence type="ECO:0000305" key="33"/>
<evidence type="ECO:0000305" key="34">
    <source>
    </source>
</evidence>
<evidence type="ECO:0000305" key="35">
    <source>
    </source>
</evidence>
<evidence type="ECO:0007829" key="36">
    <source>
        <dbReference type="PDB" id="1EUB"/>
    </source>
</evidence>
<evidence type="ECO:0007829" key="37">
    <source>
        <dbReference type="PDB" id="1PEX"/>
    </source>
</evidence>
<evidence type="ECO:0007829" key="38">
    <source>
        <dbReference type="PDB" id="3I7I"/>
    </source>
</evidence>
<evidence type="ECO:0007829" key="39">
    <source>
        <dbReference type="PDB" id="3KRY"/>
    </source>
</evidence>
<evidence type="ECO:0007829" key="40">
    <source>
        <dbReference type="PDB" id="3O2X"/>
    </source>
</evidence>
<evidence type="ECO:0007829" key="41">
    <source>
        <dbReference type="PDB" id="3ZXH"/>
    </source>
</evidence>
<evidence type="ECO:0007829" key="42">
    <source>
        <dbReference type="PDB" id="4FVL"/>
    </source>
</evidence>
<evidence type="ECO:0007829" key="43">
    <source>
        <dbReference type="PDB" id="4G0D"/>
    </source>
</evidence>
<evidence type="ECO:0007829" key="44">
    <source>
        <dbReference type="PDB" id="5B5O"/>
    </source>
</evidence>
<sequence length="471" mass="53820">MHPGVLAAFLFLSWTHCRALPLPSGGDEDDLSEEDLQFAERYLRSYYHPTNLAGILKENAASSMTERLREMQSFFGLEVTGKLDDNTLDVMKKPRCGVPDVGEYNVFPRTLKWSKMNLTYRIVNYTPDMTHSEVEKAFKKAFKVWSDVTPLNFTRLHDGIADIMISFGIKEHGDFYPFDGPSGLLAHAFPPGPNYGGDAHFDDDETWTSSSKGYNLFLVAAHEFGHSLGLDHSKDPGALMFPIYTYTGKSHFMLPDDDVQGIQSLYGPGDEDPNPKHPKTPDKCDPSLSLDAITSLRGETMIFKDRFFWRLHPQQVDAELFLTKSFWPELPNRIDAAYEHPSHDLIFIFRGRKFWALNGYDILEGYPKKISELGLPKEVKKISAAVHFEDTGKTLLFSGNQVWRYDDTNHIMDKDYPRLIEEDFPGIGDKVDAVYEKNGYIYFFNGPIQFEYSIWSNRIVRVMPANSILWC</sequence>
<reference key="1">
    <citation type="journal article" date="1994" name="J. Biol. Chem.">
        <title>Molecular cloning and expression of collagenase-3, a novel human matrix metalloproteinase produced by breast carcinomas.</title>
        <authorList>
            <person name="Freije J.M.P."/>
            <person name="Diez-Itza I."/>
            <person name="Balbin M."/>
            <person name="Sanchez L.M."/>
            <person name="Blasco R."/>
            <person name="Tolivia J."/>
            <person name="Lopez-Otin C."/>
        </authorList>
    </citation>
    <scope>NUCLEOTIDE SEQUENCE [MRNA]</scope>
    <scope>CATALYTIC ACTIVITY</scope>
    <scope>FUNCTION</scope>
    <scope>TISSUE SPECIFICITY</scope>
    <source>
        <tissue>Mammary carcinoma</tissue>
    </source>
</reference>
<reference key="2">
    <citation type="journal article" date="1998" name="Immunobiology">
        <title>A matrix metalloproteinase gene expressed in human T lymphocytes is identical with collagenase 3 from breast carcinomas.</title>
        <authorList>
            <person name="Willmroth F."/>
            <person name="Peter H.H."/>
            <person name="Conca W."/>
        </authorList>
    </citation>
    <scope>NUCLEOTIDE SEQUENCE [MRNA]</scope>
    <scope>TISSUE SPECIFICITY</scope>
</reference>
<reference key="3">
    <citation type="journal article" date="2004" name="Nat. Genet.">
        <title>Complete sequencing and characterization of 21,243 full-length human cDNAs.</title>
        <authorList>
            <person name="Ota T."/>
            <person name="Suzuki Y."/>
            <person name="Nishikawa T."/>
            <person name="Otsuki T."/>
            <person name="Sugiyama T."/>
            <person name="Irie R."/>
            <person name="Wakamatsu A."/>
            <person name="Hayashi K."/>
            <person name="Sato H."/>
            <person name="Nagai K."/>
            <person name="Kimura K."/>
            <person name="Makita H."/>
            <person name="Sekine M."/>
            <person name="Obayashi M."/>
            <person name="Nishi T."/>
            <person name="Shibahara T."/>
            <person name="Tanaka T."/>
            <person name="Ishii S."/>
            <person name="Yamamoto J."/>
            <person name="Saito K."/>
            <person name="Kawai Y."/>
            <person name="Isono Y."/>
            <person name="Nakamura Y."/>
            <person name="Nagahari K."/>
            <person name="Murakami K."/>
            <person name="Yasuda T."/>
            <person name="Iwayanagi T."/>
            <person name="Wagatsuma M."/>
            <person name="Shiratori A."/>
            <person name="Sudo H."/>
            <person name="Hosoiri T."/>
            <person name="Kaku Y."/>
            <person name="Kodaira H."/>
            <person name="Kondo H."/>
            <person name="Sugawara M."/>
            <person name="Takahashi M."/>
            <person name="Kanda K."/>
            <person name="Yokoi T."/>
            <person name="Furuya T."/>
            <person name="Kikkawa E."/>
            <person name="Omura Y."/>
            <person name="Abe K."/>
            <person name="Kamihara K."/>
            <person name="Katsuta N."/>
            <person name="Sato K."/>
            <person name="Tanikawa M."/>
            <person name="Yamazaki M."/>
            <person name="Ninomiya K."/>
            <person name="Ishibashi T."/>
            <person name="Yamashita H."/>
            <person name="Murakawa K."/>
            <person name="Fujimori K."/>
            <person name="Tanai H."/>
            <person name="Kimata M."/>
            <person name="Watanabe M."/>
            <person name="Hiraoka S."/>
            <person name="Chiba Y."/>
            <person name="Ishida S."/>
            <person name="Ono Y."/>
            <person name="Takiguchi S."/>
            <person name="Watanabe S."/>
            <person name="Yosida M."/>
            <person name="Hotuta T."/>
            <person name="Kusano J."/>
            <person name="Kanehori K."/>
            <person name="Takahashi-Fujii A."/>
            <person name="Hara H."/>
            <person name="Tanase T.-O."/>
            <person name="Nomura Y."/>
            <person name="Togiya S."/>
            <person name="Komai F."/>
            <person name="Hara R."/>
            <person name="Takeuchi K."/>
            <person name="Arita M."/>
            <person name="Imose N."/>
            <person name="Musashino K."/>
            <person name="Yuuki H."/>
            <person name="Oshima A."/>
            <person name="Sasaki N."/>
            <person name="Aotsuka S."/>
            <person name="Yoshikawa Y."/>
            <person name="Matsunawa H."/>
            <person name="Ichihara T."/>
            <person name="Shiohata N."/>
            <person name="Sano S."/>
            <person name="Moriya S."/>
            <person name="Momiyama H."/>
            <person name="Satoh N."/>
            <person name="Takami S."/>
            <person name="Terashima Y."/>
            <person name="Suzuki O."/>
            <person name="Nakagawa S."/>
            <person name="Senoh A."/>
            <person name="Mizoguchi H."/>
            <person name="Goto Y."/>
            <person name="Shimizu F."/>
            <person name="Wakebe H."/>
            <person name="Hishigaki H."/>
            <person name="Watanabe T."/>
            <person name="Sugiyama A."/>
            <person name="Takemoto M."/>
            <person name="Kawakami B."/>
            <person name="Yamazaki M."/>
            <person name="Watanabe K."/>
            <person name="Kumagai A."/>
            <person name="Itakura S."/>
            <person name="Fukuzumi Y."/>
            <person name="Fujimori Y."/>
            <person name="Komiyama M."/>
            <person name="Tashiro H."/>
            <person name="Tanigami A."/>
            <person name="Fujiwara T."/>
            <person name="Ono T."/>
            <person name="Yamada K."/>
            <person name="Fujii Y."/>
            <person name="Ozaki K."/>
            <person name="Hirao M."/>
            <person name="Ohmori Y."/>
            <person name="Kawabata A."/>
            <person name="Hikiji T."/>
            <person name="Kobatake N."/>
            <person name="Inagaki H."/>
            <person name="Ikema Y."/>
            <person name="Okamoto S."/>
            <person name="Okitani R."/>
            <person name="Kawakami T."/>
            <person name="Noguchi S."/>
            <person name="Itoh T."/>
            <person name="Shigeta K."/>
            <person name="Senba T."/>
            <person name="Matsumura K."/>
            <person name="Nakajima Y."/>
            <person name="Mizuno T."/>
            <person name="Morinaga M."/>
            <person name="Sasaki M."/>
            <person name="Togashi T."/>
            <person name="Oyama M."/>
            <person name="Hata H."/>
            <person name="Watanabe M."/>
            <person name="Komatsu T."/>
            <person name="Mizushima-Sugano J."/>
            <person name="Satoh T."/>
            <person name="Shirai Y."/>
            <person name="Takahashi Y."/>
            <person name="Nakagawa K."/>
            <person name="Okumura K."/>
            <person name="Nagase T."/>
            <person name="Nomura N."/>
            <person name="Kikuchi H."/>
            <person name="Masuho Y."/>
            <person name="Yamashita R."/>
            <person name="Nakai K."/>
            <person name="Yada T."/>
            <person name="Nakamura Y."/>
            <person name="Ohara O."/>
            <person name="Isogai T."/>
            <person name="Sugano S."/>
        </authorList>
    </citation>
    <scope>NUCLEOTIDE SEQUENCE [LARGE SCALE MRNA]</scope>
    <source>
        <tissue>Esophagus</tissue>
        <tissue>Synovium</tissue>
    </source>
</reference>
<reference key="4">
    <citation type="submission" date="2004-09" db="EMBL/GenBank/DDBJ databases">
        <authorList>
            <consortium name="NIEHS SNPs program"/>
        </authorList>
    </citation>
    <scope>NUCLEOTIDE SEQUENCE [GENOMIC DNA]</scope>
    <scope>VARIANT GLY-390</scope>
</reference>
<reference key="5">
    <citation type="journal article" date="2004" name="Genome Res.">
        <title>The status, quality, and expansion of the NIH full-length cDNA project: the Mammalian Gene Collection (MGC).</title>
        <authorList>
            <consortium name="The MGC Project Team"/>
        </authorList>
    </citation>
    <scope>NUCLEOTIDE SEQUENCE [LARGE SCALE MRNA]</scope>
    <source>
        <tissue>Lung</tissue>
    </source>
</reference>
<reference key="6">
    <citation type="journal article" date="1996" name="J. Biol. Chem.">
        <title>Biochemical characterization of human collagenase-3.</title>
        <authorList>
            <person name="Knaeuper V."/>
            <person name="Lopez-Otin C."/>
            <person name="Smith B."/>
            <person name="Knight G."/>
            <person name="Murphy G."/>
        </authorList>
    </citation>
    <scope>PROTEIN SEQUENCE OF 20-27 AND 104-118</scope>
    <scope>PROPEPTIDE</scope>
    <scope>AUTOCATALYTIC PROCESSING</scope>
    <scope>CATALYTIC ACTIVITY</scope>
    <scope>FUNCTION</scope>
    <scope>GLYCOSYLATION AT ASN-117</scope>
    <scope>SUBCELLULAR LOCATION</scope>
    <scope>ACTIVITY REGULATION</scope>
    <scope>INTERACTION WITH TIMP1; TIMP2 AND TIMP3</scope>
</reference>
<reference key="7">
    <citation type="journal article" date="1996" name="J. Biol. Chem.">
        <title>Cellular mechanisms for human procollagenase-3 (MMP-13) activation. Evidence that MT1-MMP (MMP-14) and gelatinase a (MMP-2) are able to generate active enzyme.</title>
        <authorList>
            <person name="Knaeuper V."/>
            <person name="Will H."/>
            <person name="Lopez-Otin C."/>
            <person name="Smith B."/>
            <person name="Atkinson S.J."/>
            <person name="Stanton H."/>
            <person name="Hembry R.M."/>
            <person name="Murphy G."/>
        </authorList>
    </citation>
    <scope>PARTIAL PROTEIN SEQUENCE</scope>
    <scope>PROPEPTIDE</scope>
    <scope>FUNCTION</scope>
    <scope>CATALYTIC ACTIVITY</scope>
</reference>
<reference key="8">
    <citation type="journal article" date="1996" name="FEBS Lett.">
        <title>Degradation of cartilage aggrecan by collagenase-3 (MMP-13).</title>
        <authorList>
            <person name="Fosang A.J."/>
            <person name="Last K."/>
            <person name="Knaeuper V."/>
            <person name="Murphy G."/>
            <person name="Neame P.J."/>
        </authorList>
    </citation>
    <scope>FUNCTION</scope>
</reference>
<reference key="9">
    <citation type="journal article" date="1996" name="J. Biol. Chem.">
        <title>Cytokine control of interstitial collagenase and collagenase-3 gene expression in human chondrocytes.</title>
        <authorList>
            <person name="Borden P."/>
            <person name="Solymar D."/>
            <person name="Sucharczuk A."/>
            <person name="Lindman B."/>
            <person name="Cannon P."/>
            <person name="Heller R.A."/>
        </authorList>
    </citation>
    <scope>INDUCTION</scope>
    <scope>TISSUE SPECIFICITY</scope>
</reference>
<reference key="10">
    <citation type="journal article" date="1997" name="Dev. Dyn.">
        <title>Collagenase-3 (MMP-13) is expressed by hypertrophic chondrocytes, periosteal cells, and osteoblasts during human fetal bone development.</title>
        <authorList>
            <person name="Johansson N."/>
            <person name="Saarialho-Kere U."/>
            <person name="Airola K."/>
            <person name="Herva R."/>
            <person name="Nissinen L."/>
            <person name="Westermarck J."/>
            <person name="Vuorio E."/>
            <person name="Heino J."/>
            <person name="Kaehaeri V.M."/>
        </authorList>
    </citation>
    <scope>TISSUE SPECIFICITY</scope>
    <scope>INDUCTION BY TGFB1</scope>
</reference>
<reference key="11">
    <citation type="journal article" date="1997" name="J. Biol. Chem.">
        <title>The role of the C-terminal domain of human collagenase-3 (MMP-13) in the activation of procollagenase-3, substrate specificity, and tissue inhibitor of metalloproteinase interaction.</title>
        <authorList>
            <person name="Knaeuper V."/>
            <person name="Cowell S."/>
            <person name="Smith B."/>
            <person name="Lopez-Otin C."/>
            <person name="O'Shea M."/>
            <person name="Morris H."/>
            <person name="Zardi L."/>
            <person name="Murphy G."/>
        </authorList>
    </citation>
    <scope>DOMAIN</scope>
    <scope>CATALYTIC ACTIVITY</scope>
    <scope>AUTOCATALYTIC PROCESSING</scope>
    <scope>FUNCTION</scope>
    <scope>INTERACTION WITH TIMP1; TIMP2 AND TIMP3</scope>
    <scope>ACTIVITY REGULATION</scope>
</reference>
<reference key="12">
    <citation type="journal article" date="2014" name="Am. J. Med. Genet. A">
        <title>MMP13 mutations are the cause of recessive metaphyseal dysplasia, Spahr type.</title>
        <authorList>
            <person name="Bonafe L."/>
            <person name="Liang J."/>
            <person name="Gorna M.W."/>
            <person name="Zhang Q."/>
            <person name="Ha-Vinh R."/>
            <person name="Campos-Xavier A.B."/>
            <person name="Unger S."/>
            <person name="Beckmann J.S."/>
            <person name="Le Bechec A."/>
            <person name="Stevenson B."/>
            <person name="Giedion A."/>
            <person name="Liu X."/>
            <person name="Superti-Furga G."/>
            <person name="Wang W."/>
            <person name="Spahr A."/>
            <person name="Superti-Furga A."/>
        </authorList>
    </citation>
    <scope>INVOLVEMENT IN MDST</scope>
    <scope>VARIANT MDST GLY-207</scope>
</reference>
<reference key="13">
    <citation type="journal article" date="2014" name="Cell">
        <title>A secreted tyrosine kinase acts in the extracellular environment.</title>
        <authorList>
            <person name="Bordoli M.R."/>
            <person name="Yum J."/>
            <person name="Breitkopf S.B."/>
            <person name="Thon J.N."/>
            <person name="Italiano J.E. Jr."/>
            <person name="Xiao J."/>
            <person name="Worby C."/>
            <person name="Wong S.K."/>
            <person name="Lin G."/>
            <person name="Edenius M."/>
            <person name="Keller T.L."/>
            <person name="Asara J.M."/>
            <person name="Dixon J.E."/>
            <person name="Yeo C.Y."/>
            <person name="Whitman M."/>
        </authorList>
    </citation>
    <scope>PHOSPHORYLATION AT TYR-366</scope>
</reference>
<reference key="14">
    <citation type="journal article" date="2015" name="Eur. J. Hum. Genet.">
        <title>Exome sequencing reveals a nonsense mutation in MMP13 as a new cause of autosomal recessive metaphyseal anadysplasia.</title>
        <authorList>
            <person name="Li D."/>
            <person name="Weber D.R."/>
            <person name="Deardorff M.A."/>
            <person name="Hakonarson H."/>
            <person name="Levine M.A."/>
        </authorList>
    </citation>
    <scope>INVOLVEMENT IN MDST</scope>
</reference>
<reference key="15">
    <citation type="journal article" date="1996" name="J. Mol. Biol.">
        <title>The helping hand of collagenase-3 (MMP-13): 2.7 A crystal structure of its C-terminal haemopexin-like domain.</title>
        <authorList>
            <person name="Gomis-Rueth F.-X."/>
            <person name="Gohlke U."/>
            <person name="Betz M."/>
            <person name="Knaeuper V."/>
            <person name="Murphy G."/>
            <person name="Lopez-Otin C."/>
            <person name="Bode W."/>
        </authorList>
    </citation>
    <scope>X-RAY CRYSTALLOGRAPHY (2.7 ANGSTROMS) OF 265-471 IN COMPLEX WITH CALCIUM</scope>
    <scope>DISULFIDE BOND</scope>
</reference>
<reference key="16">
    <citation type="journal article" date="1999" name="Nat. Struct. Biol.">
        <title>Crystal structures of MMP-1 and -13 reveal the structural basis for selectivity of collagenase inhibitors.</title>
        <authorList>
            <person name="Lovejoy B."/>
            <person name="Welch A.R."/>
            <person name="Carr S."/>
            <person name="Luong C."/>
            <person name="Broka C."/>
            <person name="Hendricks R.T."/>
            <person name="Campbell J.A."/>
            <person name="Walker K.A."/>
            <person name="Martin R."/>
            <person name="Van Wart H."/>
            <person name="Browner M.F."/>
        </authorList>
    </citation>
    <scope>X-RAY CRYSTALLOGRAPHY (1.60 ANGSTROMS) OF 104-271 IN COMPLEXES WITH SYNTHETIC INHIBITORS; CALCIUM AND ZINC</scope>
    <scope>PROPEPTIDE</scope>
    <scope>AUTOCATALYTIC PROCESSING</scope>
</reference>
<reference key="17">
    <citation type="journal article" date="2000" name="J. Mol. Biol.">
        <title>Solution structure of the catalytic domain of human collagenase-3 (MMP-13) complexed to a potent non-peptidic sulfonamide inhibitor: binding comparison with stromelysin-1 and collagenase-1.</title>
        <authorList>
            <person name="Zhang X."/>
            <person name="Gonnella N.C."/>
            <person name="Koehn J."/>
            <person name="Pathak N."/>
            <person name="Ganu V."/>
            <person name="Melton R."/>
            <person name="Parker D."/>
            <person name="Hu S.I."/>
            <person name="Nam K.Y."/>
        </authorList>
    </citation>
    <scope>STRUCTURE BY NMR OF 104-274 IN COMPLEX WITH CALCIUM AND ZINC</scope>
</reference>
<reference key="18">
    <citation type="journal article" date="2000" name="J. Mol. Biol.">
        <title>High-resolution solution structure of the catalytic fragment of human collagenase-3 (MMP-13) complexed with a hydroxamic acid inhibitor.</title>
        <authorList>
            <person name="Moy F.J."/>
            <person name="Chanda P.K."/>
            <person name="Chen J.M."/>
            <person name="Cosmi S."/>
            <person name="Edris W."/>
            <person name="Levin J.I."/>
            <person name="Powers R."/>
        </authorList>
    </citation>
    <scope>STRUCTURE BY NMR OF 104-268 IN COMPLEX WITH CALCIUM AND ZINC</scope>
    <scope>CATALYTIC ACTIVITY</scope>
</reference>
<reference key="19">
    <citation type="journal article" date="2005" name="Bioorg. Med. Chem. Lett.">
        <title>Potent pyrimidinetrione-based inhibitors of MMP-13 with enhanced selectivity over MMP-14.</title>
        <authorList>
            <person name="Blagg J.A."/>
            <person name="Noe M.C."/>
            <person name="Wolf-Gouveia L.A."/>
            <person name="Reiter L.A."/>
            <person name="Laird E.R."/>
            <person name="Chang S.P."/>
            <person name="Danley D.E."/>
            <person name="Downs J.T."/>
            <person name="Elliott N.C."/>
            <person name="Eskra J.D."/>
            <person name="Griffiths R.J."/>
            <person name="Hardink J.R."/>
            <person name="Haugeto A.I."/>
            <person name="Jones C.S."/>
            <person name="Liras J.L."/>
            <person name="Lopresti-Morrow L.L."/>
            <person name="Mitchell P.G."/>
            <person name="Pandit J."/>
            <person name="Robinson R.P."/>
            <person name="Subramanyam C."/>
            <person name="Vaughn-Bowser M.L."/>
            <person name="Yocum S.A."/>
        </authorList>
    </citation>
    <scope>X-RAY CRYSTALLOGRAPHY (2.30 ANGSTROMS) OF 104-271 IN COMPLEX WITH CALCIUM AND ZINC</scope>
    <scope>COFACTOR</scope>
    <scope>CATALYTIC ACTIVITY</scope>
</reference>
<reference key="20">
    <citation type="journal article" date="2005" name="Chem. Biol.">
        <title>Structural basis for the highly selective inhibition of MMP-13.</title>
        <authorList>
            <person name="Engel C.K."/>
            <person name="Pirard B."/>
            <person name="Schimanski S."/>
            <person name="Kirsch R."/>
            <person name="Habermann J."/>
            <person name="Klingler O."/>
            <person name="Schlotte V."/>
            <person name="Weithmann K.U."/>
            <person name="Wendt K.U."/>
        </authorList>
    </citation>
    <scope>X-RAY CRYSTALLOGRAPHY (1.70 ANGSTROMS) OF 104-274 IN COMPLEX WITH CALCIUM AND ZINC</scope>
    <scope>COFACTOR</scope>
    <scope>CATALYTIC ACTIVITY</scope>
</reference>
<reference key="21">
    <citation type="journal article" date="2007" name="J. Biol. Chem.">
        <title>Discovery and characterization of a novel inhibitor of matrix metalloprotease-13 that reduces cartilage damage in vivo without joint fibroplasia side effects.</title>
        <authorList>
            <person name="Johnson A.R."/>
            <person name="Pavlovsky A.G."/>
            <person name="Ortwine D.F."/>
            <person name="Prior F."/>
            <person name="Man C.F."/>
            <person name="Bornemeier D.A."/>
            <person name="Banotai C.A."/>
            <person name="Mueller W.T."/>
            <person name="McConnell P."/>
            <person name="Yan C."/>
            <person name="Baragi V."/>
            <person name="Lesch C."/>
            <person name="Roark W.H."/>
            <person name="Wilson M."/>
            <person name="Datta K."/>
            <person name="Guzman R."/>
            <person name="Han H.K."/>
            <person name="Dyer R.D."/>
        </authorList>
    </citation>
    <scope>X-RAY CRYSTALLOGRAPHY (1.74 ANGSTROMS) OF 104-270 IN COMPLEX WITH CALCIUM AND ZINC</scope>
    <scope>COFACTOR</scope>
    <scope>CATALYTIC ACTIVITY</scope>
    <scope>FUNCTION IN CARTILAGE DEGRADATION</scope>
</reference>
<reference key="22">
    <citation type="journal article" date="2007" name="J. Mol. Biol.">
        <title>Flexibility and variability of TIMP binding: X-ray structure of the complex between collagenase-3/MMP-13 and TIMP-2.</title>
        <authorList>
            <person name="Maskos K."/>
            <person name="Lang R."/>
            <person name="Tschesche H."/>
            <person name="Bode W."/>
        </authorList>
    </citation>
    <scope>X-RAY CRYSTALLOGRAPHY (2.00 ANGSTROMS) OF 104-268 IN COMPLEX WITH TIMP2; CALCIUM AND ZINC</scope>
    <scope>INTERACTION WITH TIMP2</scope>
</reference>
<reference key="23">
    <citation type="journal article" date="2009" name="J. Med. Chem.">
        <title>Discovery of potent, selective, and orally active carboxylic acid based inhibitors of matrix metalloproteinase-13.</title>
        <authorList>
            <person name="Monovich L.G."/>
            <person name="Tommasi R.A."/>
            <person name="Fujimoto R.A."/>
            <person name="Blancuzzi V."/>
            <person name="Clark K."/>
            <person name="Cornell W.D."/>
            <person name="Doti R."/>
            <person name="Doughty J."/>
            <person name="Fang J."/>
            <person name="Farley D."/>
            <person name="Fitt J."/>
            <person name="Ganu V."/>
            <person name="Goldberg R."/>
            <person name="Goldstein R."/>
            <person name="Lavoie S."/>
            <person name="Kulathila R."/>
            <person name="Macchia W."/>
            <person name="Parker D.T."/>
            <person name="Melton R."/>
            <person name="O'Byrne E."/>
            <person name="Pastor G."/>
            <person name="Pellas T."/>
            <person name="Quadros E."/>
            <person name="Reel N."/>
            <person name="Roland D.M."/>
            <person name="Sakane Y."/>
            <person name="Singh H."/>
            <person name="Skiles J."/>
            <person name="Somers J."/>
            <person name="Toscano K."/>
            <person name="Wigg A."/>
            <person name="Zhou S."/>
            <person name="Zhu L."/>
            <person name="Shieh W.C."/>
            <person name="Xue S."/>
            <person name="McQuire L.W."/>
        </authorList>
    </citation>
    <scope>X-RAY CRYSTALLOGRAPHY (1.90 ANGSTROMS) OF 104-274 IN COMPLEX WITH CALCIUM AND ZINC</scope>
    <scope>CATALYTIC ACTIVITY</scope>
    <scope>COFACTOR</scope>
    <scope>FUNCTION</scope>
</reference>
<reference key="24">
    <citation type="journal article" date="2010" name="Bioorg. Med. Chem. Lett.">
        <title>Discovery of (pyridin-4-yl)-2H-tetrazole as a novel scaffold to identify highly selective matrix metalloproteinase-13 inhibitors for the treatment of osteoarthritis.</title>
        <authorList>
            <person name="Schnute M.E."/>
            <person name="O'Brien P.M."/>
            <person name="Nahra J."/>
            <person name="Morris M."/>
            <person name="Howard Roark W."/>
            <person name="Hanau C.E."/>
            <person name="Ruminski P.G."/>
            <person name="Scholten J.A."/>
            <person name="Fletcher T.R."/>
            <person name="Hamper B.C."/>
            <person name="Carroll J.N."/>
            <person name="Patt W.C."/>
            <person name="Shieh H.S."/>
            <person name="Collins B."/>
            <person name="Pavlovsky A.G."/>
            <person name="Palmquist K.E."/>
            <person name="Aston K.W."/>
            <person name="Hitchcock J."/>
            <person name="Rogers M.D."/>
            <person name="McDonald J."/>
            <person name="Johnson A.R."/>
            <person name="Munie G.E."/>
            <person name="Wittwer A.J."/>
            <person name="Man C.F."/>
            <person name="Settle S.L."/>
            <person name="Nemirovskiy O."/>
            <person name="Vickery L.E."/>
            <person name="Agawal A."/>
            <person name="Dyer R.D."/>
            <person name="Sunyer T."/>
        </authorList>
    </citation>
    <scope>X-RAY CRYSTALLOGRAPHY (1.97 ANGSTROMS) OF 104-270 IN COMPLEX WITH CALCIUM AND ZINC</scope>
    <scope>CATALYTIC ACTIVITY</scope>
    <scope>COFACTOR</scope>
</reference>
<reference key="25">
    <citation type="journal article" date="2010" name="J. Med. Chem.">
        <title>Orally active MMP-1 sparing alpha-tetrahydropyranyl and alpha-piperidinyl sulfone matrix metalloproteinase (MMP) inhibitors with efficacy in cancer, arthritis, and cardiovascular disease.</title>
        <authorList>
            <person name="Becker D.P."/>
            <person name="Barta T.E."/>
            <person name="Bedell L.J."/>
            <person name="Boehm T.L."/>
            <person name="Bond B.R."/>
            <person name="Carroll J."/>
            <person name="Carron C.P."/>
            <person name="Decrescenzo G.A."/>
            <person name="Easton A.M."/>
            <person name="Freskos J.N."/>
            <person name="Funckes-Shippy C.L."/>
            <person name="Heron M."/>
            <person name="Hockerman S."/>
            <person name="Howard C.P."/>
            <person name="Kiefer J.R."/>
            <person name="Li M.H."/>
            <person name="Mathis K.J."/>
            <person name="McDonald J.J."/>
            <person name="Mehta P.P."/>
            <person name="Munie G.E."/>
            <person name="Sunyer T."/>
            <person name="Swearingen C.A."/>
            <person name="Villamil C.I."/>
            <person name="Welsch D."/>
            <person name="Williams J.M."/>
            <person name="Yu Y."/>
            <person name="Yao J."/>
        </authorList>
    </citation>
    <scope>X-RAY CRYSTALLOGRAPHY (1.90 ANGSTROMS) OF 104-267 IN COMPLEX WITH CALCIUM AND ZINC</scope>
    <scope>CATALYTIC ACTIVITY</scope>
    <scope>COFACTOR</scope>
    <scope>FUNCTION</scope>
</reference>
<reference key="26">
    <citation type="journal article" date="2012" name="J. Biol. Chem.">
        <title>Simple pseudo-dipeptides with a P2' glutamate: a novel inhibitor family of matrix metalloproteases and other metzincins.</title>
        <authorList>
            <person name="Devel L."/>
            <person name="Beau F."/>
            <person name="Amoura M."/>
            <person name="Vera L."/>
            <person name="Cassar-Lajeunesse E."/>
            <person name="Garcia S."/>
            <person name="Czarny B."/>
            <person name="Stura E.A."/>
            <person name="Dive V."/>
        </authorList>
    </citation>
    <scope>X-RAY CRYSTALLOGRAPHY (2.43 ANGSTROMS) OF 104-272 IN COMPLEX WITH CALCIUM AND ZINC</scope>
    <scope>COFACTOR</scope>
    <scope>CATALYTIC ACTIVITY</scope>
    <scope>ACTIVITY REGULATION</scope>
    <scope>FUNCTION</scope>
</reference>
<reference key="27">
    <citation type="journal article" date="2013" name="Bioorg. Med. Chem. Lett.">
        <title>Hydantoin based inhibitors of MMP13--discovery of AZD6605.</title>
        <authorList>
            <person name="De Savi C."/>
            <person name="Waterson D."/>
            <person name="Pape A."/>
            <person name="Lamont S."/>
            <person name="Hadley E."/>
            <person name="Mills M."/>
            <person name="Page K.M."/>
            <person name="Bowyer J."/>
            <person name="Maciewicz R.A."/>
        </authorList>
    </citation>
    <scope>X-RAY CRYSTALLOGRAPHY (1.43 ANGSTROMS) OF 103-274 IN COMPLEX WITH CALCIUM AND ZINC</scope>
    <scope>COFACTOR</scope>
    <scope>CATALYTIC ACTIVITY</scope>
    <scope>FUNCTION</scope>
</reference>
<reference key="28">
    <citation type="journal article" date="2013" name="FASEB J.">
        <title>Crystal structure of full-length human collagenase 3 (MMP-13) with peptides in the active site defines exosites in the catalytic domain.</title>
        <authorList>
            <person name="Stura E.A."/>
            <person name="Visse R."/>
            <person name="Cuniasse P."/>
            <person name="Dive V."/>
            <person name="Nagase H."/>
        </authorList>
    </citation>
    <scope>X-RAY CRYSTALLOGRAPHY (2.44 ANGSTROMS) OF 104-471 OF MUTANT ALA-223 IN COMPLEX WITH CALCIUM AND ZINC</scope>
    <scope>COFACTOR</scope>
    <scope>DISULFIDE BOND</scope>
    <scope>MUTAGENESIS OF GLU-223</scope>
    <scope>ACTIVE SITE</scope>
    <scope>SUBUNIT</scope>
</reference>
<reference key="29">
    <citation type="journal article" date="2005" name="J. Clin. Invest.">
        <title>MMP13 mutation causes spondyloepimetaphyseal dysplasia, Missouri type (SEMD(MO).</title>
        <authorList>
            <person name="Kennedy A.M."/>
            <person name="Inada M."/>
            <person name="Krane S.M."/>
            <person name="Christie P.T."/>
            <person name="Harding B."/>
            <person name="Lopez-Otin C."/>
            <person name="Sanchez L.M."/>
            <person name="Pannett A.A.J."/>
            <person name="Dearlove A."/>
            <person name="Hartley C."/>
            <person name="Byrne M.H."/>
            <person name="Reed A.A.C."/>
            <person name="Nesbit M.A."/>
            <person name="Whyte M.P."/>
            <person name="Thakker R.V."/>
        </authorList>
    </citation>
    <scope>VARIANT SEMDM SER-75</scope>
    <scope>CHARACTERIZATION OF VARIANT SEMDM SER-75</scope>
    <scope>FUNCTION IN BONE DEVELOPMENT</scope>
</reference>
<reference key="30">
    <citation type="journal article" date="2009" name="Am. J. Hum. Genet.">
        <title>Mutations in MMP9 and MMP13 determine the mode of inheritance and the clinical spectrum of metaphyseal anadysplasia.</title>
        <authorList>
            <person name="Lausch E."/>
            <person name="Keppler R."/>
            <person name="Hilbert K."/>
            <person name="Cormier-Daire V."/>
            <person name="Nikkel S."/>
            <person name="Nishimura G."/>
            <person name="Unger S."/>
            <person name="Spranger J."/>
            <person name="Superti-Furga A."/>
            <person name="Zabel B."/>
        </authorList>
    </citation>
    <scope>VARIANTS MANDP1 SER-74; THR-91 AND ASN-232</scope>
    <scope>FUNCTION IN BONE DEVELOPMENT</scope>
</reference>
<organism>
    <name type="scientific">Homo sapiens</name>
    <name type="common">Human</name>
    <dbReference type="NCBI Taxonomy" id="9606"/>
    <lineage>
        <taxon>Eukaryota</taxon>
        <taxon>Metazoa</taxon>
        <taxon>Chordata</taxon>
        <taxon>Craniata</taxon>
        <taxon>Vertebrata</taxon>
        <taxon>Euteleostomi</taxon>
        <taxon>Mammalia</taxon>
        <taxon>Eutheria</taxon>
        <taxon>Euarchontoglires</taxon>
        <taxon>Primates</taxon>
        <taxon>Haplorrhini</taxon>
        <taxon>Catarrhini</taxon>
        <taxon>Hominidae</taxon>
        <taxon>Homo</taxon>
    </lineage>
</organism>
<accession>P45452</accession>
<accession>A8K846</accession>
<accession>B2RCZ3</accession>
<accession>Q6NWN6</accession>
<proteinExistence type="evidence at protein level"/>
<feature type="signal peptide" evidence="23">
    <location>
        <begin position="1"/>
        <end position="19"/>
    </location>
</feature>
<feature type="propeptide" id="PRO_0000028788" description="Activation peptide" evidence="23">
    <location>
        <begin position="20"/>
        <end position="103"/>
    </location>
</feature>
<feature type="chain" id="PRO_0000028789" description="Collagenase 3">
    <location>
        <begin position="104"/>
        <end position="471"/>
    </location>
</feature>
<feature type="repeat" description="Hemopexin 1">
    <location>
        <begin position="281"/>
        <end position="330"/>
    </location>
</feature>
<feature type="repeat" description="Hemopexin 2">
    <location>
        <begin position="331"/>
        <end position="377"/>
    </location>
</feature>
<feature type="repeat" description="Hemopexin 3">
    <location>
        <begin position="379"/>
        <end position="427"/>
    </location>
</feature>
<feature type="repeat" description="Hemopexin 4">
    <location>
        <begin position="428"/>
        <end position="471"/>
    </location>
</feature>
<feature type="region of interest" description="Interaction with TIMP2">
    <location>
        <begin position="176"/>
        <end position="246"/>
    </location>
</feature>
<feature type="region of interest" description="Disordered" evidence="3">
    <location>
        <begin position="263"/>
        <end position="284"/>
    </location>
</feature>
<feature type="region of interest" description="Interaction with collagen">
    <location>
        <begin position="268"/>
        <end position="471"/>
    </location>
</feature>
<feature type="short sequence motif" description="Cysteine switch" evidence="1">
    <location>
        <begin position="94"/>
        <end position="101"/>
    </location>
</feature>
<feature type="compositionally biased region" description="Basic and acidic residues" evidence="3">
    <location>
        <begin position="273"/>
        <end position="284"/>
    </location>
</feature>
<feature type="active site" evidence="34">
    <location>
        <position position="223"/>
    </location>
</feature>
<feature type="binding site" description="in inhibited form" evidence="1">
    <location>
        <position position="96"/>
    </location>
    <ligand>
        <name>Zn(2+)</name>
        <dbReference type="ChEBI" id="CHEBI:29105"/>
        <label>2</label>
        <note>catalytic</note>
    </ligand>
</feature>
<feature type="binding site" evidence="5 6 7 8 10 11 12 14 15 16 17 18 27">
    <location>
        <position position="128"/>
    </location>
    <ligand>
        <name>Ca(2+)</name>
        <dbReference type="ChEBI" id="CHEBI:29108"/>
        <label>1</label>
    </ligand>
</feature>
<feature type="binding site" evidence="5 6 7 8 10 11 12 14 15 16 17 18 27">
    <location>
        <position position="162"/>
    </location>
    <ligand>
        <name>Ca(2+)</name>
        <dbReference type="ChEBI" id="CHEBI:29108"/>
        <label>2</label>
    </ligand>
</feature>
<feature type="binding site" evidence="5 6 7 8 10 11 12 14 15 16 17 18">
    <location>
        <position position="172"/>
    </location>
    <ligand>
        <name>Zn(2+)</name>
        <dbReference type="ChEBI" id="CHEBI:29105"/>
        <label>1</label>
    </ligand>
</feature>
<feature type="binding site" evidence="5 6 7 8 10 11 12 14 15 16 17 18">
    <location>
        <position position="174"/>
    </location>
    <ligand>
        <name>Zn(2+)</name>
        <dbReference type="ChEBI" id="CHEBI:29105"/>
        <label>1</label>
    </ligand>
</feature>
<feature type="binding site" evidence="5 6 7 8 10 11 12 14 15 16 17 18 27">
    <location>
        <position position="179"/>
    </location>
    <ligand>
        <name>Ca(2+)</name>
        <dbReference type="ChEBI" id="CHEBI:29108"/>
        <label>3</label>
    </ligand>
</feature>
<feature type="binding site" evidence="5 6 7 8 10 11 12 14 15 16 17 18 27">
    <location>
        <position position="180"/>
    </location>
    <ligand>
        <name>Ca(2+)</name>
        <dbReference type="ChEBI" id="CHEBI:29108"/>
        <label>3</label>
    </ligand>
</feature>
<feature type="binding site" evidence="5 6 7 8 10 11 12 14 15 16 17 18 27">
    <location>
        <position position="182"/>
    </location>
    <ligand>
        <name>Ca(2+)</name>
        <dbReference type="ChEBI" id="CHEBI:29108"/>
        <label>3</label>
    </ligand>
</feature>
<feature type="binding site" evidence="5 6 7 8 10 11 12 14 15 16 17 18 27">
    <location>
        <position position="184"/>
    </location>
    <ligand>
        <name>Ca(2+)</name>
        <dbReference type="ChEBI" id="CHEBI:29108"/>
        <label>3</label>
    </ligand>
</feature>
<feature type="binding site" evidence="5 6 7 8 10 11 12 14 15 16 17 18">
    <location>
        <position position="187"/>
    </location>
    <ligand>
        <name>Zn(2+)</name>
        <dbReference type="ChEBI" id="CHEBI:29105"/>
        <label>1</label>
    </ligand>
</feature>
<feature type="binding site" evidence="5 6 7 8 10 11 12 14 15 16 17 18 27">
    <location>
        <position position="194"/>
    </location>
    <ligand>
        <name>Ca(2+)</name>
        <dbReference type="ChEBI" id="CHEBI:29108"/>
        <label>2</label>
    </ligand>
</feature>
<feature type="binding site" evidence="5 6 7 8 10 11 12 14 15 16 17 18 27">
    <location>
        <position position="196"/>
    </location>
    <ligand>
        <name>Ca(2+)</name>
        <dbReference type="ChEBI" id="CHEBI:29108"/>
        <label>2</label>
    </ligand>
</feature>
<feature type="binding site" evidence="5 6 7 8 10 11 12 14 15 16 17 18 27">
    <location>
        <position position="198"/>
    </location>
    <ligand>
        <name>Ca(2+)</name>
        <dbReference type="ChEBI" id="CHEBI:29108"/>
        <label>2</label>
    </ligand>
</feature>
<feature type="binding site" evidence="5 6 7 8 10 11 12 14 15 16 17 18">
    <location>
        <position position="200"/>
    </location>
    <ligand>
        <name>Zn(2+)</name>
        <dbReference type="ChEBI" id="CHEBI:29105"/>
        <label>1</label>
    </ligand>
</feature>
<feature type="binding site" evidence="5 6 7 8 10 11 12 14 15 16 17 18 27">
    <location>
        <position position="202"/>
    </location>
    <ligand>
        <name>Ca(2+)</name>
        <dbReference type="ChEBI" id="CHEBI:29108"/>
        <label>3</label>
    </ligand>
</feature>
<feature type="binding site" evidence="5 6 7 8 10 11 12 14 15 16 17 18 27">
    <location>
        <position position="203"/>
    </location>
    <ligand>
        <name>Ca(2+)</name>
        <dbReference type="ChEBI" id="CHEBI:29108"/>
        <label>1</label>
    </ligand>
</feature>
<feature type="binding site" evidence="5 6 7 8 10 11 12 14 15 16 17 18 27">
    <location>
        <position position="205"/>
    </location>
    <ligand>
        <name>Ca(2+)</name>
        <dbReference type="ChEBI" id="CHEBI:29108"/>
        <label>1</label>
    </ligand>
</feature>
<feature type="binding site" evidence="5 6 7 8 10 11 12 14 15 16 17 18 27">
    <location>
        <position position="205"/>
    </location>
    <ligand>
        <name>Ca(2+)</name>
        <dbReference type="ChEBI" id="CHEBI:29108"/>
        <label>3</label>
    </ligand>
</feature>
<feature type="binding site" evidence="5 6 7 8 10 11 12 14 15 16 17 18">
    <location>
        <position position="222"/>
    </location>
    <ligand>
        <name>Zn(2+)</name>
        <dbReference type="ChEBI" id="CHEBI:29105"/>
        <label>2</label>
        <note>catalytic</note>
    </ligand>
</feature>
<feature type="binding site" evidence="5 6 7 8 10 11 12 14 15 16 17 18">
    <location>
        <position position="226"/>
    </location>
    <ligand>
        <name>Zn(2+)</name>
        <dbReference type="ChEBI" id="CHEBI:29105"/>
        <label>2</label>
        <note>catalytic</note>
    </ligand>
</feature>
<feature type="binding site" evidence="5 6 7 8 10 11 12 14 15 16 17 18">
    <location>
        <position position="232"/>
    </location>
    <ligand>
        <name>Zn(2+)</name>
        <dbReference type="ChEBI" id="CHEBI:29105"/>
        <label>2</label>
        <note>catalytic</note>
    </ligand>
</feature>
<feature type="binding site" evidence="5 6 7 8 10 11 12 14 15 16 17 18">
    <location>
        <position position="240"/>
    </location>
    <ligand>
        <name>Zn(2+)</name>
        <dbReference type="ChEBI" id="CHEBI:29105"/>
        <label>2</label>
        <note>catalytic</note>
    </ligand>
</feature>
<feature type="binding site" evidence="5 6 7 8 10 11 12 14 15 16 17 18 27">
    <location>
        <position position="291"/>
    </location>
    <ligand>
        <name>Ca(2+)</name>
        <dbReference type="ChEBI" id="CHEBI:29108"/>
        <label>4</label>
    </ligand>
</feature>
<feature type="binding site" evidence="5 6 7 8 10 11 12 14 15 16 17 18 27">
    <location>
        <position position="293"/>
    </location>
    <ligand>
        <name>Ca(2+)</name>
        <dbReference type="ChEBI" id="CHEBI:29108"/>
        <label>5</label>
    </ligand>
</feature>
<feature type="binding site" evidence="5 6 7 8 10 11 12 14 15 16 17 18 27">
    <location>
        <position position="335"/>
    </location>
    <ligand>
        <name>Ca(2+)</name>
        <dbReference type="ChEBI" id="CHEBI:29108"/>
        <label>4</label>
    </ligand>
</feature>
<feature type="binding site" evidence="5 6 7 8 10 11 12 14 15 16 17 18 27">
    <location>
        <position position="337"/>
    </location>
    <ligand>
        <name>Ca(2+)</name>
        <dbReference type="ChEBI" id="CHEBI:29108"/>
        <label>5</label>
    </ligand>
</feature>
<feature type="binding site" evidence="5 6 7 8 10 11 12 14 15 16 17 18 27">
    <location>
        <position position="383"/>
    </location>
    <ligand>
        <name>Ca(2+)</name>
        <dbReference type="ChEBI" id="CHEBI:29108"/>
        <label>4</label>
    </ligand>
</feature>
<feature type="binding site" evidence="5 6 7 8 10 11 12 14 15 16 17 18 27">
    <location>
        <position position="385"/>
    </location>
    <ligand>
        <name>Ca(2+)</name>
        <dbReference type="ChEBI" id="CHEBI:29108"/>
        <label>5</label>
    </ligand>
</feature>
<feature type="binding site" evidence="5 6 7 8 10 11 12 14 15 16 17 18 27">
    <location>
        <position position="432"/>
    </location>
    <ligand>
        <name>Ca(2+)</name>
        <dbReference type="ChEBI" id="CHEBI:29108"/>
        <label>4</label>
    </ligand>
</feature>
<feature type="binding site" evidence="5 6 7 8 10 11 12 14 15 16 17 18 27">
    <location>
        <position position="434"/>
    </location>
    <ligand>
        <name>Ca(2+)</name>
        <dbReference type="ChEBI" id="CHEBI:29108"/>
        <label>5</label>
    </ligand>
</feature>
<feature type="modified residue" description="Phosphotyrosine; by PKDCC" evidence="32">
    <location>
        <position position="366"/>
    </location>
</feature>
<feature type="glycosylation site" description="N-linked (GlcNAc...) asparagine" evidence="23">
    <location>
        <position position="117"/>
    </location>
</feature>
<feature type="glycosylation site" description="N-linked (GlcNAc...) asparagine" evidence="2">
    <location>
        <position position="152"/>
    </location>
</feature>
<feature type="disulfide bond" evidence="18 27">
    <location>
        <begin position="284"/>
        <end position="471"/>
    </location>
</feature>
<feature type="sequence variant" id="VAR_011971" description="In dbSNP:rs554797.">
    <original>H</original>
    <variation>L</variation>
    <location>
        <position position="2"/>
    </location>
</feature>
<feature type="sequence variant" id="VAR_063432" description="In MANDP1; dbSNP:rs121909498." evidence="13">
    <original>F</original>
    <variation>S</variation>
    <location>
        <position position="74"/>
    </location>
</feature>
<feature type="sequence variant" id="VAR_032753" description="In SEMDM; abnormal intracellular autoactivation and autodegradation within the ER/Golgi resulting in the secretion of small and inactive fragments; dbSNP:rs121909497." evidence="9">
    <original>F</original>
    <variation>S</variation>
    <location>
        <position position="75"/>
    </location>
</feature>
<feature type="sequence variant" id="VAR_063433" description="In MANDP1; dbSNP:rs121909499." evidence="13">
    <original>M</original>
    <variation>T</variation>
    <location>
        <position position="91"/>
    </location>
</feature>
<feature type="sequence variant" id="VAR_073418" description="In MDST; dbSNP:rs140059558." evidence="19">
    <original>W</original>
    <variation>G</variation>
    <location>
        <position position="207"/>
    </location>
</feature>
<feature type="sequence variant" id="VAR_063434" description="In MANDP1; dbSNP:rs121909500." evidence="13">
    <original>H</original>
    <variation>N</variation>
    <location>
        <position position="232"/>
    </location>
</feature>
<feature type="sequence variant" id="VAR_020534" description="In dbSNP:rs17860568." evidence="31">
    <original>D</original>
    <variation>G</variation>
    <location>
        <position position="390"/>
    </location>
</feature>
<feature type="mutagenesis site" description="Abolishes enzyme activity." evidence="18">
    <original>E</original>
    <variation>A</variation>
    <location>
        <position position="223"/>
    </location>
</feature>
<feature type="sequence conflict" description="In Ref. 3; BAF84900." evidence="33" ref="3">
    <original>D</original>
    <variation>G</variation>
    <location>
        <position position="147"/>
    </location>
</feature>
<feature type="sequence conflict" description="In Ref. 5; AAH67523." evidence="33" ref="5">
    <original>P</original>
    <variation>L</variation>
    <location>
        <position position="278"/>
    </location>
</feature>
<feature type="sequence conflict" description="In Ref. 3; BAG37740." evidence="33" ref="3">
    <original>N</original>
    <variation>D</variation>
    <location>
        <position position="438"/>
    </location>
</feature>
<feature type="helix" evidence="42">
    <location>
        <begin position="33"/>
        <end position="36"/>
    </location>
</feature>
<feature type="helix" evidence="43">
    <location>
        <begin position="38"/>
        <end position="41"/>
    </location>
</feature>
<feature type="strand" evidence="42">
    <location>
        <begin position="44"/>
        <end position="48"/>
    </location>
</feature>
<feature type="strand" evidence="41">
    <location>
        <begin position="109"/>
        <end position="111"/>
    </location>
</feature>
<feature type="strand" evidence="44">
    <location>
        <begin position="114"/>
        <end position="122"/>
    </location>
</feature>
<feature type="strand" evidence="38">
    <location>
        <begin position="127"/>
        <end position="129"/>
    </location>
</feature>
<feature type="helix" evidence="44">
    <location>
        <begin position="131"/>
        <end position="146"/>
    </location>
</feature>
<feature type="strand" evidence="40">
    <location>
        <begin position="148"/>
        <end position="150"/>
    </location>
</feature>
<feature type="strand" evidence="44">
    <location>
        <begin position="152"/>
        <end position="159"/>
    </location>
</feature>
<feature type="strand" evidence="44">
    <location>
        <begin position="162"/>
        <end position="168"/>
    </location>
</feature>
<feature type="strand" evidence="44">
    <location>
        <begin position="173"/>
        <end position="175"/>
    </location>
</feature>
<feature type="strand" evidence="44">
    <location>
        <begin position="180"/>
        <end position="183"/>
    </location>
</feature>
<feature type="strand" evidence="44">
    <location>
        <begin position="186"/>
        <end position="188"/>
    </location>
</feature>
<feature type="strand" evidence="44">
    <location>
        <begin position="191"/>
        <end position="193"/>
    </location>
</feature>
<feature type="turn" evidence="44">
    <location>
        <begin position="194"/>
        <end position="197"/>
    </location>
</feature>
<feature type="strand" evidence="44">
    <location>
        <begin position="199"/>
        <end position="202"/>
    </location>
</feature>
<feature type="strand" evidence="44">
    <location>
        <begin position="207"/>
        <end position="215"/>
    </location>
</feature>
<feature type="helix" evidence="44">
    <location>
        <begin position="216"/>
        <end position="228"/>
    </location>
</feature>
<feature type="strand" evidence="36">
    <location>
        <begin position="235"/>
        <end position="237"/>
    </location>
</feature>
<feature type="strand" evidence="44">
    <location>
        <begin position="241"/>
        <end position="243"/>
    </location>
</feature>
<feature type="strand" evidence="39">
    <location>
        <begin position="249"/>
        <end position="251"/>
    </location>
</feature>
<feature type="helix" evidence="44">
    <location>
        <begin position="256"/>
        <end position="266"/>
    </location>
</feature>
<feature type="strand" evidence="44">
    <location>
        <begin position="269"/>
        <end position="271"/>
    </location>
</feature>
<feature type="strand" evidence="42">
    <location>
        <begin position="291"/>
        <end position="296"/>
    </location>
</feature>
<feature type="strand" evidence="42">
    <location>
        <begin position="299"/>
        <end position="304"/>
    </location>
</feature>
<feature type="strand" evidence="42">
    <location>
        <begin position="307"/>
        <end position="311"/>
    </location>
</feature>
<feature type="strand" evidence="37">
    <location>
        <begin position="313"/>
        <end position="316"/>
    </location>
</feature>
<feature type="strand" evidence="42">
    <location>
        <begin position="319"/>
        <end position="322"/>
    </location>
</feature>
<feature type="helix" evidence="42">
    <location>
        <begin position="323"/>
        <end position="326"/>
    </location>
</feature>
<feature type="strand" evidence="42">
    <location>
        <begin position="335"/>
        <end position="340"/>
    </location>
</feature>
<feature type="helix" evidence="42">
    <location>
        <begin position="341"/>
        <end position="343"/>
    </location>
</feature>
<feature type="strand" evidence="42">
    <location>
        <begin position="345"/>
        <end position="350"/>
    </location>
</feature>
<feature type="strand" evidence="42">
    <location>
        <begin position="353"/>
        <end position="358"/>
    </location>
</feature>
<feature type="strand" evidence="42">
    <location>
        <begin position="367"/>
        <end position="369"/>
    </location>
</feature>
<feature type="helix" evidence="42">
    <location>
        <begin position="370"/>
        <end position="373"/>
    </location>
</feature>
<feature type="strand" evidence="42">
    <location>
        <begin position="384"/>
        <end position="387"/>
    </location>
</feature>
<feature type="turn" evidence="42">
    <location>
        <begin position="389"/>
        <end position="391"/>
    </location>
</feature>
<feature type="strand" evidence="42">
    <location>
        <begin position="393"/>
        <end position="398"/>
    </location>
</feature>
<feature type="strand" evidence="42">
    <location>
        <begin position="401"/>
        <end position="406"/>
    </location>
</feature>
<feature type="turn" evidence="42">
    <location>
        <begin position="407"/>
        <end position="410"/>
    </location>
</feature>
<feature type="helix" evidence="42">
    <location>
        <begin position="420"/>
        <end position="423"/>
    </location>
</feature>
<feature type="strand" evidence="42">
    <location>
        <begin position="432"/>
        <end position="437"/>
    </location>
</feature>
<feature type="strand" evidence="42">
    <location>
        <begin position="440"/>
        <end position="445"/>
    </location>
</feature>
<feature type="strand" evidence="42">
    <location>
        <begin position="448"/>
        <end position="453"/>
    </location>
</feature>
<feature type="turn" evidence="42">
    <location>
        <begin position="454"/>
        <end position="457"/>
    </location>
</feature>
<feature type="strand" evidence="42">
    <location>
        <begin position="458"/>
        <end position="464"/>
    </location>
</feature>
<feature type="helix" evidence="42">
    <location>
        <begin position="465"/>
        <end position="469"/>
    </location>
</feature>
<keyword id="KW-0002">3D-structure</keyword>
<keyword id="KW-0106">Calcium</keyword>
<keyword id="KW-0177">Collagen degradation</keyword>
<keyword id="KW-0903">Direct protein sequencing</keyword>
<keyword id="KW-0225">Disease variant</keyword>
<keyword id="KW-1015">Disulfide bond</keyword>
<keyword id="KW-0242">Dwarfism</keyword>
<keyword id="KW-0272">Extracellular matrix</keyword>
<keyword id="KW-0325">Glycoprotein</keyword>
<keyword id="KW-0378">Hydrolase</keyword>
<keyword id="KW-0479">Metal-binding</keyword>
<keyword id="KW-0482">Metalloprotease</keyword>
<keyword id="KW-0597">Phosphoprotein</keyword>
<keyword id="KW-0645">Protease</keyword>
<keyword id="KW-1267">Proteomics identification</keyword>
<keyword id="KW-1185">Reference proteome</keyword>
<keyword id="KW-0677">Repeat</keyword>
<keyword id="KW-0964">Secreted</keyword>
<keyword id="KW-0732">Signal</keyword>
<keyword id="KW-0862">Zinc</keyword>
<keyword id="KW-0865">Zymogen</keyword>
<name>MMP13_HUMAN</name>